<comment type="similarity">
    <text evidence="5">Belongs to the peptidase A1 family.</text>
</comment>
<name>PEP2B_GADMO</name>
<accession>P56272</accession>
<feature type="chain" id="PRO_0000199516" description="Pepsin-2B">
    <location>
        <begin position="1"/>
        <end position="324"/>
    </location>
</feature>
<feature type="domain" description="Peptidase A1" evidence="2">
    <location>
        <begin position="14"/>
        <end position="321"/>
    </location>
</feature>
<feature type="region of interest" description="Disordered" evidence="4">
    <location>
        <begin position="86"/>
        <end position="109"/>
    </location>
</feature>
<feature type="compositionally biased region" description="Polar residues" evidence="4">
    <location>
        <begin position="96"/>
        <end position="107"/>
    </location>
</feature>
<feature type="active site" evidence="3">
    <location>
        <position position="32"/>
    </location>
</feature>
<feature type="active site" evidence="3">
    <location>
        <position position="214"/>
    </location>
</feature>
<feature type="disulfide bond" evidence="1">
    <location>
        <begin position="45"/>
        <end position="50"/>
    </location>
</feature>
<feature type="disulfide bond" evidence="1">
    <location>
        <begin position="206"/>
        <end position="209"/>
    </location>
</feature>
<feature type="disulfide bond" evidence="1">
    <location>
        <begin position="247"/>
        <end position="280"/>
    </location>
</feature>
<feature type="strand" evidence="6">
    <location>
        <begin position="2"/>
        <end position="9"/>
    </location>
</feature>
<feature type="turn" evidence="6">
    <location>
        <begin position="10"/>
        <end position="12"/>
    </location>
</feature>
<feature type="strand" evidence="6">
    <location>
        <begin position="13"/>
        <end position="20"/>
    </location>
</feature>
<feature type="turn" evidence="6">
    <location>
        <begin position="21"/>
        <end position="24"/>
    </location>
</feature>
<feature type="strand" evidence="6">
    <location>
        <begin position="25"/>
        <end position="32"/>
    </location>
</feature>
<feature type="strand" evidence="6">
    <location>
        <begin position="38"/>
        <end position="40"/>
    </location>
</feature>
<feature type="helix" evidence="6">
    <location>
        <begin position="48"/>
        <end position="51"/>
    </location>
</feature>
<feature type="helix" evidence="6">
    <location>
        <begin position="58"/>
        <end position="60"/>
    </location>
</feature>
<feature type="strand" evidence="6">
    <location>
        <begin position="65"/>
        <end position="74"/>
    </location>
</feature>
<feature type="strand" evidence="6">
    <location>
        <begin position="79"/>
        <end position="94"/>
    </location>
</feature>
<feature type="strand" evidence="6">
    <location>
        <begin position="96"/>
        <end position="106"/>
    </location>
</feature>
<feature type="turn" evidence="6">
    <location>
        <begin position="110"/>
        <end position="114"/>
    </location>
</feature>
<feature type="strand" evidence="6">
    <location>
        <begin position="116"/>
        <end position="122"/>
    </location>
</feature>
<feature type="helix" evidence="6">
    <location>
        <begin position="126"/>
        <end position="128"/>
    </location>
</feature>
<feature type="helix" evidence="6">
    <location>
        <begin position="130"/>
        <end position="132"/>
    </location>
</feature>
<feature type="helix" evidence="6">
    <location>
        <begin position="136"/>
        <end position="142"/>
    </location>
</feature>
<feature type="strand" evidence="6">
    <location>
        <begin position="146"/>
        <end position="154"/>
    </location>
</feature>
<feature type="strand" evidence="6">
    <location>
        <begin position="163"/>
        <end position="169"/>
    </location>
</feature>
<feature type="helix" evidence="6">
    <location>
        <begin position="172"/>
        <end position="174"/>
    </location>
</feature>
<feature type="strand" evidence="6">
    <location>
        <begin position="180"/>
        <end position="183"/>
    </location>
</feature>
<feature type="turn" evidence="6">
    <location>
        <begin position="187"/>
        <end position="190"/>
    </location>
</feature>
<feature type="strand" evidence="6">
    <location>
        <begin position="191"/>
        <end position="194"/>
    </location>
</feature>
<feature type="strand" evidence="6">
    <location>
        <begin position="196"/>
        <end position="199"/>
    </location>
</feature>
<feature type="strand" evidence="6">
    <location>
        <begin position="209"/>
        <end position="213"/>
    </location>
</feature>
<feature type="strand" evidence="6">
    <location>
        <begin position="218"/>
        <end position="222"/>
    </location>
</feature>
<feature type="turn" evidence="6">
    <location>
        <begin position="224"/>
        <end position="226"/>
    </location>
</feature>
<feature type="helix" evidence="6">
    <location>
        <begin position="227"/>
        <end position="234"/>
    </location>
</feature>
<feature type="strand" evidence="6">
    <location>
        <begin position="249"/>
        <end position="253"/>
    </location>
</feature>
<feature type="strand" evidence="6">
    <location>
        <begin position="256"/>
        <end position="260"/>
    </location>
</feature>
<feature type="strand" evidence="6">
    <location>
        <begin position="263"/>
        <end position="267"/>
    </location>
</feature>
<feature type="helix" evidence="6">
    <location>
        <begin position="269"/>
        <end position="272"/>
    </location>
</feature>
<feature type="strand" evidence="6">
    <location>
        <begin position="273"/>
        <end position="278"/>
    </location>
</feature>
<feature type="strand" evidence="6">
    <location>
        <begin position="280"/>
        <end position="282"/>
    </location>
</feature>
<feature type="strand" evidence="6">
    <location>
        <begin position="284"/>
        <end position="286"/>
    </location>
</feature>
<feature type="strand" evidence="6">
    <location>
        <begin position="292"/>
        <end position="294"/>
    </location>
</feature>
<feature type="strand" evidence="6">
    <location>
        <begin position="296"/>
        <end position="299"/>
    </location>
</feature>
<feature type="helix" evidence="6">
    <location>
        <begin position="301"/>
        <end position="306"/>
    </location>
</feature>
<feature type="strand" evidence="6">
    <location>
        <begin position="307"/>
        <end position="312"/>
    </location>
</feature>
<feature type="turn" evidence="6">
    <location>
        <begin position="313"/>
        <end position="316"/>
    </location>
</feature>
<feature type="strand" evidence="6">
    <location>
        <begin position="317"/>
        <end position="323"/>
    </location>
</feature>
<protein>
    <recommendedName>
        <fullName>Pepsin-2B</fullName>
        <ecNumber>3.4.23.-</ecNumber>
    </recommendedName>
    <alternativeName>
        <fullName>Pepsin IIB</fullName>
    </alternativeName>
</protein>
<keyword id="KW-0002">3D-structure</keyword>
<keyword id="KW-0064">Aspartyl protease</keyword>
<keyword id="KW-0222">Digestion</keyword>
<keyword id="KW-0903">Direct protein sequencing</keyword>
<keyword id="KW-1015">Disulfide bond</keyword>
<keyword id="KW-0378">Hydrolase</keyword>
<keyword id="KW-0645">Protease</keyword>
<keyword id="KW-1185">Reference proteome</keyword>
<reference key="1">
    <citation type="journal article" date="1998" name="Acta Crystallogr. D">
        <title>Structure and proposed amino-acid sequence of a pepsin from Atlantic cod (Gadus morhua).</title>
        <authorList>
            <person name="Karlsen S."/>
            <person name="Hough E."/>
            <person name="Olsen R.L."/>
        </authorList>
    </citation>
    <scope>PROTEIN SEQUENCE</scope>
    <scope>CRYSTALLIZATION</scope>
    <source>
        <tissue>Stomach</tissue>
    </source>
</reference>
<reference key="2">
    <citation type="journal article" date="1990" name="Comp. Biochem. Physiol.">
        <title>Catalytic properties and chemical composition of pepsins from Atlantic cod (Gadus morhua).</title>
        <authorList>
            <person name="Gildberg A."/>
            <person name="Olsen R.L."/>
            <person name="Bjarnason J.B."/>
        </authorList>
    </citation>
    <scope>X-RAY CRYSTALLOGRAPHY (2.16 ANGSTROMS)</scope>
</reference>
<organism>
    <name type="scientific">Gadus morhua</name>
    <name type="common">Atlantic cod</name>
    <dbReference type="NCBI Taxonomy" id="8049"/>
    <lineage>
        <taxon>Eukaryota</taxon>
        <taxon>Metazoa</taxon>
        <taxon>Chordata</taxon>
        <taxon>Craniata</taxon>
        <taxon>Vertebrata</taxon>
        <taxon>Euteleostomi</taxon>
        <taxon>Actinopterygii</taxon>
        <taxon>Neopterygii</taxon>
        <taxon>Teleostei</taxon>
        <taxon>Neoteleostei</taxon>
        <taxon>Acanthomorphata</taxon>
        <taxon>Zeiogadaria</taxon>
        <taxon>Gadariae</taxon>
        <taxon>Gadiformes</taxon>
        <taxon>Gadoidei</taxon>
        <taxon>Gadidae</taxon>
        <taxon>Gadus</taxon>
    </lineage>
</organism>
<evidence type="ECO:0000250" key="1"/>
<evidence type="ECO:0000255" key="2">
    <source>
        <dbReference type="PROSITE-ProRule" id="PRU01103"/>
    </source>
</evidence>
<evidence type="ECO:0000255" key="3">
    <source>
        <dbReference type="PROSITE-ProRule" id="PRU10094"/>
    </source>
</evidence>
<evidence type="ECO:0000256" key="4">
    <source>
        <dbReference type="SAM" id="MobiDB-lite"/>
    </source>
</evidence>
<evidence type="ECO:0000305" key="5"/>
<evidence type="ECO:0007829" key="6">
    <source>
        <dbReference type="PDB" id="1AM5"/>
    </source>
</evidence>
<proteinExistence type="evidence at protein level"/>
<sequence length="324" mass="34014">RVTEQMKNEADTEYYGVISIGTPPESFKVIFDTGSSNLWVSSSHCSAQACSNHNKFKPRQSSTYVETGKTVDLTYGTGGMRGILGQDTVSVGGGSDPNQELGESQTEPGPFQAAAPFDGILGLAYPSIAAAGAVPVFDNMGSQSLVEKDLFSFYLSGGGANGSEVMLGGVDNSHYTGSIHWIPVTAEKYWQVALDGITVNGQTAACEGCQAIVDTGTSKIVAPVSALANIMKDIGASENQGEMMGNCASVQSLPDITFTINGVKQPLPPSAYIEGDQAFCTSGLGSSGVPSNTSELWIFGDVFLRNYYTIYDRTNNKVGFAPAA</sequence>
<dbReference type="EC" id="3.4.23.-"/>
<dbReference type="PDB" id="1AM5">
    <property type="method" value="X-ray"/>
    <property type="resolution" value="2.16 A"/>
    <property type="chains" value="A=1-324"/>
</dbReference>
<dbReference type="PDBsum" id="1AM5"/>
<dbReference type="SMR" id="P56272"/>
<dbReference type="MEROPS" id="A01.055"/>
<dbReference type="EvolutionaryTrace" id="P56272"/>
<dbReference type="Proteomes" id="UP000694546">
    <property type="component" value="Unplaced"/>
</dbReference>
<dbReference type="GO" id="GO:0004190">
    <property type="term" value="F:aspartic-type endopeptidase activity"/>
    <property type="evidence" value="ECO:0007669"/>
    <property type="project" value="UniProtKB-KW"/>
</dbReference>
<dbReference type="GO" id="GO:0007586">
    <property type="term" value="P:digestion"/>
    <property type="evidence" value="ECO:0007669"/>
    <property type="project" value="UniProtKB-KW"/>
</dbReference>
<dbReference type="GO" id="GO:0006508">
    <property type="term" value="P:proteolysis"/>
    <property type="evidence" value="ECO:0007669"/>
    <property type="project" value="UniProtKB-KW"/>
</dbReference>
<dbReference type="FunFam" id="2.40.70.10:FF:000006">
    <property type="entry name" value="Cathepsin E"/>
    <property type="match status" value="1"/>
</dbReference>
<dbReference type="FunFam" id="2.40.70.10:FF:000004">
    <property type="entry name" value="Pepsin A"/>
    <property type="match status" value="1"/>
</dbReference>
<dbReference type="Gene3D" id="2.40.70.10">
    <property type="entry name" value="Acid Proteases"/>
    <property type="match status" value="2"/>
</dbReference>
<dbReference type="InterPro" id="IPR001461">
    <property type="entry name" value="Aspartic_peptidase_A1"/>
</dbReference>
<dbReference type="InterPro" id="IPR001969">
    <property type="entry name" value="Aspartic_peptidase_AS"/>
</dbReference>
<dbReference type="InterPro" id="IPR033121">
    <property type="entry name" value="PEPTIDASE_A1"/>
</dbReference>
<dbReference type="InterPro" id="IPR021109">
    <property type="entry name" value="Peptidase_aspartic_dom_sf"/>
</dbReference>
<dbReference type="PANTHER" id="PTHR47966">
    <property type="entry name" value="BETA-SITE APP-CLEAVING ENZYME, ISOFORM A-RELATED"/>
    <property type="match status" value="1"/>
</dbReference>
<dbReference type="PANTHER" id="PTHR47966:SF22">
    <property type="entry name" value="PEPSIN A-3-RELATED"/>
    <property type="match status" value="1"/>
</dbReference>
<dbReference type="Pfam" id="PF00026">
    <property type="entry name" value="Asp"/>
    <property type="match status" value="1"/>
</dbReference>
<dbReference type="PRINTS" id="PR00792">
    <property type="entry name" value="PEPSIN"/>
</dbReference>
<dbReference type="SUPFAM" id="SSF50630">
    <property type="entry name" value="Acid proteases"/>
    <property type="match status" value="1"/>
</dbReference>
<dbReference type="PROSITE" id="PS00141">
    <property type="entry name" value="ASP_PROTEASE"/>
    <property type="match status" value="2"/>
</dbReference>
<dbReference type="PROSITE" id="PS51767">
    <property type="entry name" value="PEPTIDASE_A1"/>
    <property type="match status" value="1"/>
</dbReference>